<comment type="function">
    <text evidence="1">Component of the small ribosomal subunit. The ribosome is a large ribonucleoprotein complex responsible for the synthesis of proteins in the cell. Part of the small subunit (SSU) processome, first precursor of the small eukaryotic ribosomal subunit. During the assembly of the SSU processome in the nucleolus, many ribosome biogenesis factors, an RNA chaperone and ribosomal proteins associate with the nascent pre-rRNA and work in concert to generate RNA folding, modifications, rearrangements and cleavage as well as targeted degradation of pre-ribosomal RNA by the RNA exosome.</text>
</comment>
<comment type="subunit">
    <text evidence="1">Component of the small ribosomal subunit. Identified in a IGF2BP1-dependent mRNP granule complex containing untranslated mRNAs. Part of the small subunit (SSU) processome, composed of more than 70 proteins and the RNA chaperone small nucleolar RNA (snoRNA) U3.</text>
</comment>
<comment type="subcellular location">
    <subcellularLocation>
        <location evidence="1">Cytoplasm</location>
    </subcellularLocation>
    <subcellularLocation>
        <location evidence="1">Membrane</location>
        <topology evidence="1">Lipid-anchor</topology>
    </subcellularLocation>
    <subcellularLocation>
        <location evidence="1">Nucleus</location>
        <location evidence="1">Nucleolus</location>
    </subcellularLocation>
    <text evidence="1">Localized in cytoplasmic mRNP granules containing untranslated mRNAs.</text>
</comment>
<comment type="similarity">
    <text evidence="4">Belongs to the eukaryotic ribosomal protein eS8 family.</text>
</comment>
<name>RS8_RAT</name>
<keyword id="KW-0002">3D-structure</keyword>
<keyword id="KW-0007">Acetylation</keyword>
<keyword id="KW-0963">Cytoplasm</keyword>
<keyword id="KW-0903">Direct protein sequencing</keyword>
<keyword id="KW-1017">Isopeptide bond</keyword>
<keyword id="KW-0449">Lipoprotein</keyword>
<keyword id="KW-0472">Membrane</keyword>
<keyword id="KW-0519">Myristate</keyword>
<keyword id="KW-0539">Nucleus</keyword>
<keyword id="KW-0597">Phosphoprotein</keyword>
<keyword id="KW-1185">Reference proteome</keyword>
<keyword id="KW-0687">Ribonucleoprotein</keyword>
<keyword id="KW-0689">Ribosomal protein</keyword>
<keyword id="KW-0832">Ubl conjugation</keyword>
<organism>
    <name type="scientific">Rattus norvegicus</name>
    <name type="common">Rat</name>
    <dbReference type="NCBI Taxonomy" id="10116"/>
    <lineage>
        <taxon>Eukaryota</taxon>
        <taxon>Metazoa</taxon>
        <taxon>Chordata</taxon>
        <taxon>Craniata</taxon>
        <taxon>Vertebrata</taxon>
        <taxon>Euteleostomi</taxon>
        <taxon>Mammalia</taxon>
        <taxon>Eutheria</taxon>
        <taxon>Euarchontoglires</taxon>
        <taxon>Glires</taxon>
        <taxon>Rodentia</taxon>
        <taxon>Myomorpha</taxon>
        <taxon>Muroidea</taxon>
        <taxon>Muridae</taxon>
        <taxon>Murinae</taxon>
        <taxon>Rattus</taxon>
    </lineage>
</organism>
<feature type="initiator methionine" description="Removed" evidence="1">
    <location>
        <position position="1"/>
    </location>
</feature>
<feature type="chain" id="PRO_0000122242" description="Small ribosomal subunit protein eS8">
    <location>
        <begin position="2"/>
        <end position="208"/>
    </location>
</feature>
<feature type="region of interest" description="Disordered" evidence="3">
    <location>
        <begin position="1"/>
        <end position="27"/>
    </location>
</feature>
<feature type="compositionally biased region" description="Basic residues" evidence="3">
    <location>
        <begin position="8"/>
        <end position="26"/>
    </location>
</feature>
<feature type="modified residue" description="N6-acetyllysine" evidence="2">
    <location>
        <position position="37"/>
    </location>
</feature>
<feature type="modified residue" description="N6-acetyllysine" evidence="2">
    <location>
        <position position="128"/>
    </location>
</feature>
<feature type="modified residue" description="Phosphothreonine" evidence="1">
    <location>
        <position position="130"/>
    </location>
</feature>
<feature type="modified residue" description="Phosphoserine" evidence="1">
    <location>
        <position position="160"/>
    </location>
</feature>
<feature type="lipid moiety-binding region" description="N-myristoyl glycine" evidence="1">
    <location>
        <position position="2"/>
    </location>
</feature>
<feature type="cross-link" description="Glycyl lysine isopeptide (Lys-Gly) (interchain with G-Cter in SUMO2)" evidence="1">
    <location>
        <position position="170"/>
    </location>
</feature>
<feature type="cross-link" description="Glycyl lysine isopeptide (Lys-Gly) (interchain with G-Cter in SUMO2)" evidence="1">
    <location>
        <position position="193"/>
    </location>
</feature>
<dbReference type="EMBL" id="X06423">
    <property type="protein sequence ID" value="CAA29732.1"/>
    <property type="molecule type" value="mRNA"/>
</dbReference>
<dbReference type="EMBL" id="BC082802">
    <property type="protein sequence ID" value="AAH82802.1"/>
    <property type="molecule type" value="mRNA"/>
</dbReference>
<dbReference type="PIR" id="S01609">
    <property type="entry name" value="R3RT8"/>
</dbReference>
<dbReference type="RefSeq" id="NP_113894.1">
    <property type="nucleotide sequence ID" value="NM_031706.1"/>
</dbReference>
<dbReference type="PDB" id="7QGG">
    <property type="method" value="EM"/>
    <property type="resolution" value="2.86 A"/>
    <property type="chains" value="SI=1-208"/>
</dbReference>
<dbReference type="PDBsum" id="7QGG"/>
<dbReference type="EMDB" id="EMD-13954"/>
<dbReference type="SMR" id="P62243"/>
<dbReference type="BioGRID" id="249257">
    <property type="interactions" value="8"/>
</dbReference>
<dbReference type="FunCoup" id="P62243">
    <property type="interactions" value="2849"/>
</dbReference>
<dbReference type="IntAct" id="P62243">
    <property type="interactions" value="7"/>
</dbReference>
<dbReference type="STRING" id="10116.ENSRNOP00000074753"/>
<dbReference type="GlyGen" id="P62243">
    <property type="glycosylation" value="1 site, 1 O-linked glycan (1 site)"/>
</dbReference>
<dbReference type="iPTMnet" id="P62243"/>
<dbReference type="PhosphoSitePlus" id="P62243"/>
<dbReference type="jPOST" id="P62243"/>
<dbReference type="PaxDb" id="10116-ENSRNOP00000025796"/>
<dbReference type="GeneID" id="65136"/>
<dbReference type="KEGG" id="rno:65136"/>
<dbReference type="UCSC" id="RGD:61910">
    <property type="organism name" value="rat"/>
</dbReference>
<dbReference type="AGR" id="RGD:61910"/>
<dbReference type="CTD" id="6202"/>
<dbReference type="RGD" id="61910">
    <property type="gene designation" value="Rps8"/>
</dbReference>
<dbReference type="VEuPathDB" id="HostDB:ENSRNOG00000054626"/>
<dbReference type="eggNOG" id="KOG3283">
    <property type="taxonomic scope" value="Eukaryota"/>
</dbReference>
<dbReference type="HOGENOM" id="CLU_080597_1_1_1"/>
<dbReference type="InParanoid" id="P62243"/>
<dbReference type="OrthoDB" id="9114at9989"/>
<dbReference type="PhylomeDB" id="P62243"/>
<dbReference type="TreeFam" id="TF300041"/>
<dbReference type="Reactome" id="R-RNO-156827">
    <property type="pathway name" value="L13a-mediated translational silencing of Ceruloplasmin expression"/>
</dbReference>
<dbReference type="Reactome" id="R-RNO-1799339">
    <property type="pathway name" value="SRP-dependent cotranslational protein targeting to membrane"/>
</dbReference>
<dbReference type="Reactome" id="R-RNO-6791226">
    <property type="pathway name" value="Major pathway of rRNA processing in the nucleolus and cytosol"/>
</dbReference>
<dbReference type="Reactome" id="R-RNO-72649">
    <property type="pathway name" value="Translation initiation complex formation"/>
</dbReference>
<dbReference type="Reactome" id="R-RNO-72689">
    <property type="pathway name" value="Formation of a pool of free 40S subunits"/>
</dbReference>
<dbReference type="Reactome" id="R-RNO-72695">
    <property type="pathway name" value="Formation of the ternary complex, and subsequently, the 43S complex"/>
</dbReference>
<dbReference type="Reactome" id="R-RNO-72702">
    <property type="pathway name" value="Ribosomal scanning and start codon recognition"/>
</dbReference>
<dbReference type="Reactome" id="R-RNO-72706">
    <property type="pathway name" value="GTP hydrolysis and joining of the 60S ribosomal subunit"/>
</dbReference>
<dbReference type="Reactome" id="R-RNO-975956">
    <property type="pathway name" value="Nonsense Mediated Decay (NMD) independent of the Exon Junction Complex (EJC)"/>
</dbReference>
<dbReference type="Reactome" id="R-RNO-975957">
    <property type="pathway name" value="Nonsense Mediated Decay (NMD) enhanced by the Exon Junction Complex (EJC)"/>
</dbReference>
<dbReference type="PRO" id="PR:P62243"/>
<dbReference type="Proteomes" id="UP000002494">
    <property type="component" value="Chromosome 5"/>
</dbReference>
<dbReference type="Bgee" id="ENSRNOG00000054626">
    <property type="expression patterns" value="Expressed in ovary and 19 other cell types or tissues"/>
</dbReference>
<dbReference type="ExpressionAtlas" id="P62243">
    <property type="expression patterns" value="baseline and differential"/>
</dbReference>
<dbReference type="GO" id="GO:0022626">
    <property type="term" value="C:cytosolic ribosome"/>
    <property type="evidence" value="ECO:0000266"/>
    <property type="project" value="RGD"/>
</dbReference>
<dbReference type="GO" id="GO:0022627">
    <property type="term" value="C:cytosolic small ribosomal subunit"/>
    <property type="evidence" value="ECO:0000314"/>
    <property type="project" value="RGD"/>
</dbReference>
<dbReference type="GO" id="GO:0005783">
    <property type="term" value="C:endoplasmic reticulum"/>
    <property type="evidence" value="ECO:0007669"/>
    <property type="project" value="Ensembl"/>
</dbReference>
<dbReference type="GO" id="GO:0016020">
    <property type="term" value="C:membrane"/>
    <property type="evidence" value="ECO:0007669"/>
    <property type="project" value="UniProtKB-SubCell"/>
</dbReference>
<dbReference type="GO" id="GO:0005730">
    <property type="term" value="C:nucleolus"/>
    <property type="evidence" value="ECO:0007669"/>
    <property type="project" value="UniProtKB-SubCell"/>
</dbReference>
<dbReference type="GO" id="GO:0098794">
    <property type="term" value="C:postsynapse"/>
    <property type="evidence" value="ECO:0000303"/>
    <property type="project" value="SynGO"/>
</dbReference>
<dbReference type="GO" id="GO:1990904">
    <property type="term" value="C:ribonucleoprotein complex"/>
    <property type="evidence" value="ECO:0000250"/>
    <property type="project" value="UniProtKB"/>
</dbReference>
<dbReference type="GO" id="GO:0005840">
    <property type="term" value="C:ribosome"/>
    <property type="evidence" value="ECO:0000303"/>
    <property type="project" value="SynGO"/>
</dbReference>
<dbReference type="GO" id="GO:0032040">
    <property type="term" value="C:small-subunit processome"/>
    <property type="evidence" value="ECO:0000250"/>
    <property type="project" value="UniProtKB"/>
</dbReference>
<dbReference type="GO" id="GO:0003735">
    <property type="term" value="F:structural constituent of ribosome"/>
    <property type="evidence" value="ECO:0000266"/>
    <property type="project" value="RGD"/>
</dbReference>
<dbReference type="GO" id="GO:0000462">
    <property type="term" value="P:maturation of SSU-rRNA from tricistronic rRNA transcript (SSU-rRNA, 5.8S rRNA, LSU-rRNA)"/>
    <property type="evidence" value="ECO:0000318"/>
    <property type="project" value="GO_Central"/>
</dbReference>
<dbReference type="GO" id="GO:0042274">
    <property type="term" value="P:ribosomal small subunit biogenesis"/>
    <property type="evidence" value="ECO:0000250"/>
    <property type="project" value="UniProtKB"/>
</dbReference>
<dbReference type="GO" id="GO:0006412">
    <property type="term" value="P:translation"/>
    <property type="evidence" value="ECO:0007669"/>
    <property type="project" value="InterPro"/>
</dbReference>
<dbReference type="CDD" id="cd11380">
    <property type="entry name" value="Ribosomal_S8e_like"/>
    <property type="match status" value="1"/>
</dbReference>
<dbReference type="FunFam" id="1.10.168.20:FF:000001">
    <property type="entry name" value="40S ribosomal protein S8"/>
    <property type="match status" value="1"/>
</dbReference>
<dbReference type="FunFam" id="3.10.290.70:FF:000004">
    <property type="entry name" value="40S ribosomal protein S8"/>
    <property type="match status" value="1"/>
</dbReference>
<dbReference type="FunFam" id="3.10.290.70:FF:000005">
    <property type="entry name" value="40S ribosomal protein S8"/>
    <property type="match status" value="1"/>
</dbReference>
<dbReference type="Gene3D" id="3.10.290.70">
    <property type="match status" value="1"/>
</dbReference>
<dbReference type="Gene3D" id="1.10.168.20">
    <property type="entry name" value="Ribosomal protein S8e, subdomain"/>
    <property type="match status" value="1"/>
</dbReference>
<dbReference type="InterPro" id="IPR001047">
    <property type="entry name" value="Ribosomal_eS8"/>
</dbReference>
<dbReference type="InterPro" id="IPR018283">
    <property type="entry name" value="Ribosomal_eS8_CS"/>
</dbReference>
<dbReference type="InterPro" id="IPR042563">
    <property type="entry name" value="Ribosomal_protein_eS8_euk"/>
</dbReference>
<dbReference type="InterPro" id="IPR022309">
    <property type="entry name" value="Ribosomal_Se8/biogenesis_NSA2"/>
</dbReference>
<dbReference type="NCBIfam" id="TIGR00307">
    <property type="entry name" value="eS8"/>
    <property type="match status" value="1"/>
</dbReference>
<dbReference type="PANTHER" id="PTHR10394">
    <property type="entry name" value="40S RIBOSOMAL PROTEIN S8"/>
    <property type="match status" value="1"/>
</dbReference>
<dbReference type="Pfam" id="PF01201">
    <property type="entry name" value="Ribosomal_S8e"/>
    <property type="match status" value="1"/>
</dbReference>
<dbReference type="PROSITE" id="PS01193">
    <property type="entry name" value="RIBOSOMAL_S8E"/>
    <property type="match status" value="1"/>
</dbReference>
<sequence length="208" mass="24205">MGISRDNWHKRRKTGGKRKPYHKKRKYELGRPAANTKIGPRRIHTVRVRGGNKKYRALRLDVGNFSWGSECCTRKTRIIDVVYNASNNELVRTKTLVKNCIVLIDSTPYRQWYESHYALPLGRKKGAKLTPEEEEILNKKRSKKIQKKYDERKKNAKISSLLEEQFQQGKLLACIASRPGQCGRADGYVLEGKELEFYLRKIKARKGK</sequence>
<gene>
    <name type="primary">Rps8</name>
</gene>
<protein>
    <recommendedName>
        <fullName evidence="4">Small ribosomal subunit protein eS8</fullName>
    </recommendedName>
    <alternativeName>
        <fullName>40S ribosomal protein S8</fullName>
    </alternativeName>
</protein>
<proteinExistence type="evidence at protein level"/>
<reference key="1">
    <citation type="journal article" date="1987" name="Nucleic Acids Res.">
        <title>The primary structure of rat ribosomal protein S8.</title>
        <authorList>
            <person name="Chan Y.-L."/>
            <person name="Lin A."/>
            <person name="Paz V."/>
            <person name="Wool I.G."/>
        </authorList>
    </citation>
    <scope>NUCLEOTIDE SEQUENCE [MRNA]</scope>
    <scope>PROTEIN SEQUENCE OF 205-208</scope>
    <source>
        <strain>Sprague-Dawley</strain>
        <tissue>Liver</tissue>
    </source>
</reference>
<reference key="2">
    <citation type="journal article" date="2004" name="Genome Res.">
        <title>The status, quality, and expansion of the NIH full-length cDNA project: the Mammalian Gene Collection (MGC).</title>
        <authorList>
            <consortium name="The MGC Project Team"/>
        </authorList>
    </citation>
    <scope>NUCLEOTIDE SEQUENCE [LARGE SCALE MRNA]</scope>
    <source>
        <tissue>Ovary</tissue>
    </source>
</reference>
<reference key="3">
    <citation type="journal article" date="1979" name="J. Supramol. Struct.">
        <title>Sequence of the amino-terminal region of rat liver ribosomal proteins S4, S6, S8, L6, L7a, L18, L27, L30, L37, L37a, and L39.</title>
        <authorList>
            <person name="Wittmann-Liebold B."/>
            <person name="Geissler A.W."/>
            <person name="Lin A."/>
            <person name="Wool I.G."/>
        </authorList>
    </citation>
    <scope>PARTIAL PROTEIN SEQUENCE</scope>
    <source>
        <tissue>Liver</tissue>
    </source>
</reference>
<evidence type="ECO:0000250" key="1">
    <source>
        <dbReference type="UniProtKB" id="P62241"/>
    </source>
</evidence>
<evidence type="ECO:0000250" key="2">
    <source>
        <dbReference type="UniProtKB" id="P62242"/>
    </source>
</evidence>
<evidence type="ECO:0000256" key="3">
    <source>
        <dbReference type="SAM" id="MobiDB-lite"/>
    </source>
</evidence>
<evidence type="ECO:0000305" key="4"/>
<accession>P62243</accession>
<accession>P09058</accession>